<dbReference type="EC" id="4.3.2.10" evidence="1"/>
<dbReference type="EMBL" id="CP001657">
    <property type="protein sequence ID" value="ACT12780.1"/>
    <property type="molecule type" value="Genomic_DNA"/>
</dbReference>
<dbReference type="RefSeq" id="WP_015839991.1">
    <property type="nucleotide sequence ID" value="NC_012917.1"/>
</dbReference>
<dbReference type="SMR" id="C6DF71"/>
<dbReference type="STRING" id="561230.PC1_1739"/>
<dbReference type="GeneID" id="67793742"/>
<dbReference type="KEGG" id="pct:PC1_1739"/>
<dbReference type="eggNOG" id="COG0107">
    <property type="taxonomic scope" value="Bacteria"/>
</dbReference>
<dbReference type="HOGENOM" id="CLU_048577_4_0_6"/>
<dbReference type="OrthoDB" id="9781903at2"/>
<dbReference type="UniPathway" id="UPA00031">
    <property type="reaction ID" value="UER00010"/>
</dbReference>
<dbReference type="Proteomes" id="UP000002736">
    <property type="component" value="Chromosome"/>
</dbReference>
<dbReference type="GO" id="GO:0005737">
    <property type="term" value="C:cytoplasm"/>
    <property type="evidence" value="ECO:0007669"/>
    <property type="project" value="UniProtKB-SubCell"/>
</dbReference>
<dbReference type="GO" id="GO:0000107">
    <property type="term" value="F:imidazoleglycerol-phosphate synthase activity"/>
    <property type="evidence" value="ECO:0007669"/>
    <property type="project" value="UniProtKB-UniRule"/>
</dbReference>
<dbReference type="GO" id="GO:0016829">
    <property type="term" value="F:lyase activity"/>
    <property type="evidence" value="ECO:0007669"/>
    <property type="project" value="UniProtKB-KW"/>
</dbReference>
<dbReference type="GO" id="GO:0000105">
    <property type="term" value="P:L-histidine biosynthetic process"/>
    <property type="evidence" value="ECO:0007669"/>
    <property type="project" value="UniProtKB-UniRule"/>
</dbReference>
<dbReference type="CDD" id="cd04731">
    <property type="entry name" value="HisF"/>
    <property type="match status" value="1"/>
</dbReference>
<dbReference type="FunFam" id="3.20.20.70:FF:000006">
    <property type="entry name" value="Imidazole glycerol phosphate synthase subunit HisF"/>
    <property type="match status" value="1"/>
</dbReference>
<dbReference type="Gene3D" id="3.20.20.70">
    <property type="entry name" value="Aldolase class I"/>
    <property type="match status" value="1"/>
</dbReference>
<dbReference type="HAMAP" id="MF_01013">
    <property type="entry name" value="HisF"/>
    <property type="match status" value="1"/>
</dbReference>
<dbReference type="InterPro" id="IPR013785">
    <property type="entry name" value="Aldolase_TIM"/>
</dbReference>
<dbReference type="InterPro" id="IPR006062">
    <property type="entry name" value="His_biosynth"/>
</dbReference>
<dbReference type="InterPro" id="IPR004651">
    <property type="entry name" value="HisF"/>
</dbReference>
<dbReference type="InterPro" id="IPR050064">
    <property type="entry name" value="IGPS_HisA/HisF"/>
</dbReference>
<dbReference type="InterPro" id="IPR011060">
    <property type="entry name" value="RibuloseP-bd_barrel"/>
</dbReference>
<dbReference type="NCBIfam" id="TIGR00735">
    <property type="entry name" value="hisF"/>
    <property type="match status" value="1"/>
</dbReference>
<dbReference type="PANTHER" id="PTHR21235:SF2">
    <property type="entry name" value="IMIDAZOLE GLYCEROL PHOSPHATE SYNTHASE HISHF"/>
    <property type="match status" value="1"/>
</dbReference>
<dbReference type="PANTHER" id="PTHR21235">
    <property type="entry name" value="IMIDAZOLE GLYCEROL PHOSPHATE SYNTHASE SUBUNIT HISF/H IGP SYNTHASE SUBUNIT HISF/H"/>
    <property type="match status" value="1"/>
</dbReference>
<dbReference type="Pfam" id="PF00977">
    <property type="entry name" value="His_biosynth"/>
    <property type="match status" value="1"/>
</dbReference>
<dbReference type="SUPFAM" id="SSF51366">
    <property type="entry name" value="Ribulose-phoshate binding barrel"/>
    <property type="match status" value="1"/>
</dbReference>
<evidence type="ECO:0000255" key="1">
    <source>
        <dbReference type="HAMAP-Rule" id="MF_01013"/>
    </source>
</evidence>
<comment type="function">
    <text evidence="1">IGPS catalyzes the conversion of PRFAR and glutamine to IGP, AICAR and glutamate. The HisF subunit catalyzes the cyclization activity that produces IGP and AICAR from PRFAR using the ammonia provided by the HisH subunit.</text>
</comment>
<comment type="catalytic activity">
    <reaction evidence="1">
        <text>5-[(5-phospho-1-deoxy-D-ribulos-1-ylimino)methylamino]-1-(5-phospho-beta-D-ribosyl)imidazole-4-carboxamide + L-glutamine = D-erythro-1-(imidazol-4-yl)glycerol 3-phosphate + 5-amino-1-(5-phospho-beta-D-ribosyl)imidazole-4-carboxamide + L-glutamate + H(+)</text>
        <dbReference type="Rhea" id="RHEA:24793"/>
        <dbReference type="ChEBI" id="CHEBI:15378"/>
        <dbReference type="ChEBI" id="CHEBI:29985"/>
        <dbReference type="ChEBI" id="CHEBI:58278"/>
        <dbReference type="ChEBI" id="CHEBI:58359"/>
        <dbReference type="ChEBI" id="CHEBI:58475"/>
        <dbReference type="ChEBI" id="CHEBI:58525"/>
        <dbReference type="EC" id="4.3.2.10"/>
    </reaction>
</comment>
<comment type="pathway">
    <text evidence="1">Amino-acid biosynthesis; L-histidine biosynthesis; L-histidine from 5-phospho-alpha-D-ribose 1-diphosphate: step 5/9.</text>
</comment>
<comment type="subunit">
    <text evidence="1">Heterodimer of HisH and HisF.</text>
</comment>
<comment type="subcellular location">
    <subcellularLocation>
        <location evidence="1">Cytoplasm</location>
    </subcellularLocation>
</comment>
<comment type="similarity">
    <text evidence="1">Belongs to the HisA/HisF family.</text>
</comment>
<reference key="1">
    <citation type="submission" date="2009-07" db="EMBL/GenBank/DDBJ databases">
        <title>Complete sequence of Pectobacterium carotovorum subsp. carotovorum PC1.</title>
        <authorList>
            <consortium name="US DOE Joint Genome Institute"/>
            <person name="Lucas S."/>
            <person name="Copeland A."/>
            <person name="Lapidus A."/>
            <person name="Glavina del Rio T."/>
            <person name="Tice H."/>
            <person name="Bruce D."/>
            <person name="Goodwin L."/>
            <person name="Pitluck S."/>
            <person name="Munk A.C."/>
            <person name="Brettin T."/>
            <person name="Detter J.C."/>
            <person name="Han C."/>
            <person name="Tapia R."/>
            <person name="Larimer F."/>
            <person name="Land M."/>
            <person name="Hauser L."/>
            <person name="Kyrpides N."/>
            <person name="Mikhailova N."/>
            <person name="Balakrishnan V."/>
            <person name="Glasner J."/>
            <person name="Perna N.T."/>
        </authorList>
    </citation>
    <scope>NUCLEOTIDE SEQUENCE [LARGE SCALE GENOMIC DNA]</scope>
    <source>
        <strain>PC1</strain>
    </source>
</reference>
<organism>
    <name type="scientific">Pectobacterium carotovorum subsp. carotovorum (strain PC1)</name>
    <dbReference type="NCBI Taxonomy" id="561230"/>
    <lineage>
        <taxon>Bacteria</taxon>
        <taxon>Pseudomonadati</taxon>
        <taxon>Pseudomonadota</taxon>
        <taxon>Gammaproteobacteria</taxon>
        <taxon>Enterobacterales</taxon>
        <taxon>Pectobacteriaceae</taxon>
        <taxon>Pectobacterium</taxon>
    </lineage>
</organism>
<name>HIS6_PECCP</name>
<gene>
    <name evidence="1" type="primary">hisF</name>
    <name type="ordered locus">PC1_1739</name>
</gene>
<feature type="chain" id="PRO_1000213215" description="Imidazole glycerol phosphate synthase subunit HisF">
    <location>
        <begin position="1"/>
        <end position="258"/>
    </location>
</feature>
<feature type="active site" evidence="1">
    <location>
        <position position="11"/>
    </location>
</feature>
<feature type="active site" evidence="1">
    <location>
        <position position="130"/>
    </location>
</feature>
<sequence length="258" mass="28421">MLAKRIIPCLDVRNGQVVKGVQFRNHEIIGDIVPLAQRYAQEGADELVFYDITASSDGRVVDKSWVSRVAEVIDIPFCVAGGIKSVEEAGQILSFGADKISINSPALADPELITRLADRYGVQCIVVGIDTWHDATTGRYHVNQYTGDEARTKVTTWETLDWVEEVQKRGAGEIVLNMMNQDGVRNGYDLHQLNLVRDVCNVPLIASGGAGTMEHFLDAFQTAHVDGALAASVFHKQIINIGELKQYLKQQGVEIRVC</sequence>
<proteinExistence type="inferred from homology"/>
<accession>C6DF71</accession>
<keyword id="KW-0028">Amino-acid biosynthesis</keyword>
<keyword id="KW-0963">Cytoplasm</keyword>
<keyword id="KW-0368">Histidine biosynthesis</keyword>
<keyword id="KW-0456">Lyase</keyword>
<protein>
    <recommendedName>
        <fullName evidence="1">Imidazole glycerol phosphate synthase subunit HisF</fullName>
        <ecNumber evidence="1">4.3.2.10</ecNumber>
    </recommendedName>
    <alternativeName>
        <fullName evidence="1">IGP synthase cyclase subunit</fullName>
    </alternativeName>
    <alternativeName>
        <fullName evidence="1">IGP synthase subunit HisF</fullName>
    </alternativeName>
    <alternativeName>
        <fullName evidence="1">ImGP synthase subunit HisF</fullName>
        <shortName evidence="1">IGPS subunit HisF</shortName>
    </alternativeName>
</protein>